<gene>
    <name evidence="1" type="primary">fbp</name>
    <name type="ordered locus">FMG_0509</name>
</gene>
<organism>
    <name type="scientific">Finegoldia magna (strain ATCC 29328 / DSM 20472 / WAL 2508)</name>
    <name type="common">Peptostreptococcus magnus</name>
    <dbReference type="NCBI Taxonomy" id="334413"/>
    <lineage>
        <taxon>Bacteria</taxon>
        <taxon>Bacillati</taxon>
        <taxon>Bacillota</taxon>
        <taxon>Tissierellia</taxon>
        <taxon>Tissierellales</taxon>
        <taxon>Peptoniphilaceae</taxon>
        <taxon>Finegoldia</taxon>
    </lineage>
</organism>
<keyword id="KW-0119">Carbohydrate metabolism</keyword>
<keyword id="KW-0378">Hydrolase</keyword>
<keyword id="KW-0464">Manganese</keyword>
<keyword id="KW-1185">Reference proteome</keyword>
<reference key="1">
    <citation type="journal article" date="2008" name="DNA Res.">
        <title>Complete genome sequence of Finegoldia magna, an anaerobic opportunistic pathogen.</title>
        <authorList>
            <person name="Goto T."/>
            <person name="Yamashita A."/>
            <person name="Hirakawa H."/>
            <person name="Matsutani M."/>
            <person name="Todo K."/>
            <person name="Ohshima K."/>
            <person name="Toh H."/>
            <person name="Miyamoto K."/>
            <person name="Kuhara S."/>
            <person name="Hattori M."/>
            <person name="Shimizu T."/>
            <person name="Akimoto S."/>
        </authorList>
    </citation>
    <scope>NUCLEOTIDE SEQUENCE [LARGE SCALE GENOMIC DNA]</scope>
    <source>
        <strain>ATCC 29328 / DSM 20472 / WAL 2508</strain>
    </source>
</reference>
<protein>
    <recommendedName>
        <fullName evidence="1">Fructose-1,6-bisphosphatase class 3</fullName>
        <shortName evidence="1">FBPase class 3</shortName>
        <ecNumber evidence="1">3.1.3.11</ecNumber>
    </recommendedName>
    <alternativeName>
        <fullName evidence="1">D-fructose-1,6-bisphosphate 1-phosphohydrolase class 3</fullName>
    </alternativeName>
</protein>
<accession>B0S0K3</accession>
<comment type="catalytic activity">
    <reaction evidence="1">
        <text>beta-D-fructose 1,6-bisphosphate + H2O = beta-D-fructose 6-phosphate + phosphate</text>
        <dbReference type="Rhea" id="RHEA:11064"/>
        <dbReference type="ChEBI" id="CHEBI:15377"/>
        <dbReference type="ChEBI" id="CHEBI:32966"/>
        <dbReference type="ChEBI" id="CHEBI:43474"/>
        <dbReference type="ChEBI" id="CHEBI:57634"/>
        <dbReference type="EC" id="3.1.3.11"/>
    </reaction>
</comment>
<comment type="cofactor">
    <cofactor evidence="1">
        <name>Mn(2+)</name>
        <dbReference type="ChEBI" id="CHEBI:29035"/>
    </cofactor>
</comment>
<comment type="pathway">
    <text evidence="1">Carbohydrate biosynthesis; gluconeogenesis.</text>
</comment>
<comment type="similarity">
    <text evidence="1">Belongs to the FBPase class 3 family.</text>
</comment>
<name>F16PC_FINM2</name>
<sequence>MNNLKYLKLLAKEFPTIEQAANKIISLTSLSVLPKGTEYFLSDLHGQYDSFNRIIKSASGNTRIKIDLEFKDKLSESRKNQLANLIYDPKTIINITKENDEYTETWIRDTIFYLIRIAKRVASKYSRQKVRNQTPFYYRDLIDEMLNIQYESLNKKEYFNQLLDSIIKIEVSENFIITLCELIQDLNIDWLHIVGDIFDRGKRPDIIMDTLIAKKDVDIQYGNHDVTWIGAYLGSYVNACNVVRNAISYNNFQSLEDGYGINLRLLSTLADESYYDDPCERFKVRILDDNKHSETDLLHAARMHKAISIIQFKLENQLFKRNPEFEQLDRLYLERIDFKNGIYKDANGKAHALLDIKFPTVDPDNPLELTPSEQEVVECISKSFRTSHRLKEHMDFLFSYGSVYKIANSNLLFHGCIPMNKDGSFEEFTYQSNTYSGKSLLDFFEGIINSARNMDDNDPDRQTALDFFWYMWCGPKSPMFGKSKISTFENFFITDKDVRKEVSNPYFSLSKIEKYADKIFEEFNMNPETSHIINGHVPVKSINGEKPVSANGKTYVIDGGISEAYQKKTGIAGYTLTFNSHHLAIAKHKNFQVMESVHGAYTPEVTITEEFPKRMLIKDTDEGEEILELIEDLESLIDAYRSGTIQQNSN</sequence>
<dbReference type="EC" id="3.1.3.11" evidence="1"/>
<dbReference type="EMBL" id="AP008971">
    <property type="protein sequence ID" value="BAG07927.1"/>
    <property type="molecule type" value="Genomic_DNA"/>
</dbReference>
<dbReference type="RefSeq" id="WP_012290453.1">
    <property type="nucleotide sequence ID" value="NC_010376.1"/>
</dbReference>
<dbReference type="STRING" id="334413.FMG_0509"/>
<dbReference type="KEGG" id="fma:FMG_0509"/>
<dbReference type="eggNOG" id="COG3855">
    <property type="taxonomic scope" value="Bacteria"/>
</dbReference>
<dbReference type="HOGENOM" id="CLU_028392_2_0_9"/>
<dbReference type="UniPathway" id="UPA00138"/>
<dbReference type="Proteomes" id="UP000001319">
    <property type="component" value="Chromosome"/>
</dbReference>
<dbReference type="GO" id="GO:0042132">
    <property type="term" value="F:fructose 1,6-bisphosphate 1-phosphatase activity"/>
    <property type="evidence" value="ECO:0007669"/>
    <property type="project" value="UniProtKB-UniRule"/>
</dbReference>
<dbReference type="GO" id="GO:0006094">
    <property type="term" value="P:gluconeogenesis"/>
    <property type="evidence" value="ECO:0007669"/>
    <property type="project" value="UniProtKB-UniRule"/>
</dbReference>
<dbReference type="Gene3D" id="3.60.21.10">
    <property type="match status" value="1"/>
</dbReference>
<dbReference type="HAMAP" id="MF_01854">
    <property type="entry name" value="FBPase_class3"/>
    <property type="match status" value="1"/>
</dbReference>
<dbReference type="InterPro" id="IPR009164">
    <property type="entry name" value="FBPtase_class3"/>
</dbReference>
<dbReference type="InterPro" id="IPR029052">
    <property type="entry name" value="Metallo-depent_PP-like"/>
</dbReference>
<dbReference type="Pfam" id="PF06874">
    <property type="entry name" value="FBPase_2"/>
    <property type="match status" value="1"/>
</dbReference>
<dbReference type="SUPFAM" id="SSF56300">
    <property type="entry name" value="Metallo-dependent phosphatases"/>
    <property type="match status" value="1"/>
</dbReference>
<evidence type="ECO:0000255" key="1">
    <source>
        <dbReference type="HAMAP-Rule" id="MF_01854"/>
    </source>
</evidence>
<proteinExistence type="inferred from homology"/>
<feature type="chain" id="PRO_0000363092" description="Fructose-1,6-bisphosphatase class 3">
    <location>
        <begin position="1"/>
        <end position="650"/>
    </location>
</feature>